<protein>
    <recommendedName>
        <fullName evidence="1">Aspartate--tRNA(Asp) ligase</fullName>
        <ecNumber evidence="1">6.1.1.12</ecNumber>
    </recommendedName>
    <alternativeName>
        <fullName evidence="1">Aspartyl-tRNA synthetase</fullName>
        <shortName evidence="1">AspRS</shortName>
    </alternativeName>
    <alternativeName>
        <fullName evidence="1">Discriminating aspartyl-tRNA synthetase</fullName>
        <shortName evidence="1">D-AspRS</shortName>
    </alternativeName>
</protein>
<sequence>MLRTHYSNEITEELNGKRVKVAGWVQEVKDLGGIKFVWIRDREGIVQITAPKKKVSEEIFKLIPKLNSEDVVVVEGIVNFTPKAKLGFEIIPEKFEILNRTQTPLPLDPTGKVKAELDTRLDNRFIDLRNPKVMAIFKIRSNVFRAIREFFYNEGFIEIHTPKIIATATEGGTELFPIKYFENDAFLAQSPQLYKQIMMATGLDKVFETAPIFRAEEHNTTRHLNEAWSIDAEIAFIENEEEVMDVLENLVVYAINYVREHNERELKILEFELEEPKQPFPRVTYDKALEILSDLGKEIPWGEDIDTEGEKLLGKYMSENEGVELYFIYKYPSEAKPFYIMKYDEKPEICRAFDLEYRGIEISSGGQREHRYEVLLEQIKEKGLNPESFEFYLKAFKYGMPPHGGFGLGAERLIMRMLNIGNIREVILFPRDRKRLIP</sequence>
<name>SYD_PYRFU</name>
<feature type="chain" id="PRO_0000111003" description="Aspartate--tRNA(Asp) ligase">
    <location>
        <begin position="1"/>
        <end position="438"/>
    </location>
</feature>
<feature type="region of interest" description="Aspartate" evidence="1">
    <location>
        <begin position="192"/>
        <end position="195"/>
    </location>
</feature>
<feature type="binding site" evidence="1">
    <location>
        <position position="170"/>
    </location>
    <ligand>
        <name>L-aspartate</name>
        <dbReference type="ChEBI" id="CHEBI:29991"/>
    </ligand>
</feature>
<feature type="binding site" evidence="1">
    <location>
        <begin position="214"/>
        <end position="216"/>
    </location>
    <ligand>
        <name>ATP</name>
        <dbReference type="ChEBI" id="CHEBI:30616"/>
    </ligand>
</feature>
<feature type="binding site" evidence="1">
    <location>
        <position position="214"/>
    </location>
    <ligand>
        <name>L-aspartate</name>
        <dbReference type="ChEBI" id="CHEBI:29991"/>
    </ligand>
</feature>
<feature type="binding site" evidence="1">
    <location>
        <begin position="222"/>
        <end position="224"/>
    </location>
    <ligand>
        <name>ATP</name>
        <dbReference type="ChEBI" id="CHEBI:30616"/>
    </ligand>
</feature>
<feature type="binding site" evidence="1">
    <location>
        <position position="361"/>
    </location>
    <ligand>
        <name>ATP</name>
        <dbReference type="ChEBI" id="CHEBI:30616"/>
    </ligand>
</feature>
<feature type="binding site" evidence="1">
    <location>
        <position position="361"/>
    </location>
    <ligand>
        <name>Mg(2+)</name>
        <dbReference type="ChEBI" id="CHEBI:18420"/>
        <label>2</label>
    </ligand>
</feature>
<feature type="binding site" evidence="1">
    <location>
        <position position="361"/>
    </location>
    <ligand>
        <name>Mg(2+)</name>
        <dbReference type="ChEBI" id="CHEBI:18420"/>
        <label>3</label>
    </ligand>
</feature>
<feature type="binding site" evidence="1">
    <location>
        <position position="364"/>
    </location>
    <ligand>
        <name>L-aspartate</name>
        <dbReference type="ChEBI" id="CHEBI:29991"/>
    </ligand>
</feature>
<feature type="binding site" evidence="1">
    <location>
        <position position="364"/>
    </location>
    <ligand>
        <name>Mg(2+)</name>
        <dbReference type="ChEBI" id="CHEBI:18420"/>
        <label>2</label>
    </ligand>
</feature>
<feature type="binding site" evidence="1">
    <location>
        <position position="368"/>
    </location>
    <ligand>
        <name>L-aspartate</name>
        <dbReference type="ChEBI" id="CHEBI:29991"/>
    </ligand>
</feature>
<feature type="binding site" evidence="1">
    <location>
        <begin position="409"/>
        <end position="412"/>
    </location>
    <ligand>
        <name>ATP</name>
        <dbReference type="ChEBI" id="CHEBI:30616"/>
    </ligand>
</feature>
<feature type="site" description="Important for tRNA discrimination" evidence="1">
    <location>
        <position position="85"/>
    </location>
</feature>
<accession>Q8U2G6</accession>
<evidence type="ECO:0000255" key="1">
    <source>
        <dbReference type="HAMAP-Rule" id="MF_02075"/>
    </source>
</evidence>
<dbReference type="EC" id="6.1.1.12" evidence="1"/>
<dbReference type="EMBL" id="AE009950">
    <property type="protein sequence ID" value="AAL80993.1"/>
    <property type="molecule type" value="Genomic_DNA"/>
</dbReference>
<dbReference type="RefSeq" id="WP_011012002.1">
    <property type="nucleotide sequence ID" value="NZ_CP023154.1"/>
</dbReference>
<dbReference type="SMR" id="Q8U2G6"/>
<dbReference type="STRING" id="186497.PF0869"/>
<dbReference type="PaxDb" id="186497-PF0869"/>
<dbReference type="GeneID" id="41712679"/>
<dbReference type="KEGG" id="pfu:PF0869"/>
<dbReference type="PATRIC" id="fig|186497.12.peg.920"/>
<dbReference type="eggNOG" id="arCOG00406">
    <property type="taxonomic scope" value="Archaea"/>
</dbReference>
<dbReference type="HOGENOM" id="CLU_004553_2_1_2"/>
<dbReference type="OrthoDB" id="5908at2157"/>
<dbReference type="PhylomeDB" id="Q8U2G6"/>
<dbReference type="Proteomes" id="UP000001013">
    <property type="component" value="Chromosome"/>
</dbReference>
<dbReference type="GO" id="GO:0017101">
    <property type="term" value="C:aminoacyl-tRNA synthetase multienzyme complex"/>
    <property type="evidence" value="ECO:0007669"/>
    <property type="project" value="TreeGrafter"/>
</dbReference>
<dbReference type="GO" id="GO:0005829">
    <property type="term" value="C:cytosol"/>
    <property type="evidence" value="ECO:0007669"/>
    <property type="project" value="TreeGrafter"/>
</dbReference>
<dbReference type="GO" id="GO:0004815">
    <property type="term" value="F:aspartate-tRNA ligase activity"/>
    <property type="evidence" value="ECO:0007669"/>
    <property type="project" value="UniProtKB-UniRule"/>
</dbReference>
<dbReference type="GO" id="GO:0005524">
    <property type="term" value="F:ATP binding"/>
    <property type="evidence" value="ECO:0007669"/>
    <property type="project" value="UniProtKB-UniRule"/>
</dbReference>
<dbReference type="GO" id="GO:0000287">
    <property type="term" value="F:magnesium ion binding"/>
    <property type="evidence" value="ECO:0007669"/>
    <property type="project" value="UniProtKB-UniRule"/>
</dbReference>
<dbReference type="GO" id="GO:0003723">
    <property type="term" value="F:RNA binding"/>
    <property type="evidence" value="ECO:0007669"/>
    <property type="project" value="TreeGrafter"/>
</dbReference>
<dbReference type="GO" id="GO:0006422">
    <property type="term" value="P:aspartyl-tRNA aminoacylation"/>
    <property type="evidence" value="ECO:0007669"/>
    <property type="project" value="UniProtKB-UniRule"/>
</dbReference>
<dbReference type="CDD" id="cd00776">
    <property type="entry name" value="AsxRS_core"/>
    <property type="match status" value="1"/>
</dbReference>
<dbReference type="CDD" id="cd04316">
    <property type="entry name" value="ND_PkAspRS_like_N"/>
    <property type="match status" value="1"/>
</dbReference>
<dbReference type="FunFam" id="3.30.930.10:FF:000038">
    <property type="entry name" value="Aspartate--tRNA ligase"/>
    <property type="match status" value="1"/>
</dbReference>
<dbReference type="FunFam" id="2.40.50.140:FF:000324">
    <property type="entry name" value="Aspartate--tRNA(Asp/Asn) ligase"/>
    <property type="match status" value="1"/>
</dbReference>
<dbReference type="Gene3D" id="3.30.930.10">
    <property type="entry name" value="Bira Bifunctional Protein, Domain 2"/>
    <property type="match status" value="1"/>
</dbReference>
<dbReference type="Gene3D" id="2.40.50.140">
    <property type="entry name" value="Nucleic acid-binding proteins"/>
    <property type="match status" value="1"/>
</dbReference>
<dbReference type="HAMAP" id="MF_02075">
    <property type="entry name" value="Asp_tRNA_synth_type2"/>
    <property type="match status" value="1"/>
</dbReference>
<dbReference type="InterPro" id="IPR004364">
    <property type="entry name" value="Aa-tRNA-synt_II"/>
</dbReference>
<dbReference type="InterPro" id="IPR006195">
    <property type="entry name" value="aa-tRNA-synth_II"/>
</dbReference>
<dbReference type="InterPro" id="IPR045864">
    <property type="entry name" value="aa-tRNA-synth_II/BPL/LPL"/>
</dbReference>
<dbReference type="InterPro" id="IPR004523">
    <property type="entry name" value="Asp-tRNA_synthase_2"/>
</dbReference>
<dbReference type="InterPro" id="IPR002312">
    <property type="entry name" value="Asp/Asn-tRNA-synth_IIb"/>
</dbReference>
<dbReference type="InterPro" id="IPR012340">
    <property type="entry name" value="NA-bd_OB-fold"/>
</dbReference>
<dbReference type="InterPro" id="IPR004365">
    <property type="entry name" value="NA-bd_OB_tRNA"/>
</dbReference>
<dbReference type="NCBIfam" id="TIGR00458">
    <property type="entry name" value="aspS_nondisc"/>
    <property type="match status" value="1"/>
</dbReference>
<dbReference type="NCBIfam" id="NF003483">
    <property type="entry name" value="PRK05159.1"/>
    <property type="match status" value="1"/>
</dbReference>
<dbReference type="PANTHER" id="PTHR43450:SF1">
    <property type="entry name" value="ASPARTATE--TRNA LIGASE, CYTOPLASMIC"/>
    <property type="match status" value="1"/>
</dbReference>
<dbReference type="PANTHER" id="PTHR43450">
    <property type="entry name" value="ASPARTYL-TRNA SYNTHETASE"/>
    <property type="match status" value="1"/>
</dbReference>
<dbReference type="Pfam" id="PF00152">
    <property type="entry name" value="tRNA-synt_2"/>
    <property type="match status" value="1"/>
</dbReference>
<dbReference type="Pfam" id="PF01336">
    <property type="entry name" value="tRNA_anti-codon"/>
    <property type="match status" value="1"/>
</dbReference>
<dbReference type="PRINTS" id="PR01042">
    <property type="entry name" value="TRNASYNTHASP"/>
</dbReference>
<dbReference type="SUPFAM" id="SSF55681">
    <property type="entry name" value="Class II aaRS and biotin synthetases"/>
    <property type="match status" value="1"/>
</dbReference>
<dbReference type="SUPFAM" id="SSF50249">
    <property type="entry name" value="Nucleic acid-binding proteins"/>
    <property type="match status" value="1"/>
</dbReference>
<dbReference type="PROSITE" id="PS50862">
    <property type="entry name" value="AA_TRNA_LIGASE_II"/>
    <property type="match status" value="1"/>
</dbReference>
<proteinExistence type="inferred from homology"/>
<reference key="1">
    <citation type="journal article" date="1999" name="Genetics">
        <title>Divergence of the hyperthermophilic archaea Pyrococcus furiosus and P. horikoshii inferred from complete genomic sequences.</title>
        <authorList>
            <person name="Maeder D.L."/>
            <person name="Weiss R.B."/>
            <person name="Dunn D.M."/>
            <person name="Cherry J.L."/>
            <person name="Gonzalez J.M."/>
            <person name="DiRuggiero J."/>
            <person name="Robb F.T."/>
        </authorList>
    </citation>
    <scope>NUCLEOTIDE SEQUENCE [LARGE SCALE GENOMIC DNA]</scope>
    <source>
        <strain>ATCC 43587 / DSM 3638 / JCM 8422 / Vc1</strain>
    </source>
</reference>
<organism>
    <name type="scientific">Pyrococcus furiosus (strain ATCC 43587 / DSM 3638 / JCM 8422 / Vc1)</name>
    <dbReference type="NCBI Taxonomy" id="186497"/>
    <lineage>
        <taxon>Archaea</taxon>
        <taxon>Methanobacteriati</taxon>
        <taxon>Methanobacteriota</taxon>
        <taxon>Thermococci</taxon>
        <taxon>Thermococcales</taxon>
        <taxon>Thermococcaceae</taxon>
        <taxon>Pyrococcus</taxon>
    </lineage>
</organism>
<comment type="function">
    <text evidence="1">Catalyzes the attachment of L-aspartate to tRNA(Asp) in a two-step reaction: L-aspartate is first activated by ATP to form Asp-AMP and then transferred to the acceptor end of tRNA(Asp).</text>
</comment>
<comment type="catalytic activity">
    <reaction evidence="1">
        <text>tRNA(Asp) + L-aspartate + ATP = L-aspartyl-tRNA(Asp) + AMP + diphosphate</text>
        <dbReference type="Rhea" id="RHEA:19649"/>
        <dbReference type="Rhea" id="RHEA-COMP:9660"/>
        <dbReference type="Rhea" id="RHEA-COMP:9678"/>
        <dbReference type="ChEBI" id="CHEBI:29991"/>
        <dbReference type="ChEBI" id="CHEBI:30616"/>
        <dbReference type="ChEBI" id="CHEBI:33019"/>
        <dbReference type="ChEBI" id="CHEBI:78442"/>
        <dbReference type="ChEBI" id="CHEBI:78516"/>
        <dbReference type="ChEBI" id="CHEBI:456215"/>
        <dbReference type="EC" id="6.1.1.12"/>
    </reaction>
</comment>
<comment type="cofactor">
    <cofactor evidence="1">
        <name>Mg(2+)</name>
        <dbReference type="ChEBI" id="CHEBI:18420"/>
    </cofactor>
    <text evidence="1">Binds 3 Mg(2+) cations per subunit. The strongest magnesium site (Mg1) is bound to the beta- and gamma-phosphates of ATP and four water molecules complete its coordination sphere.</text>
</comment>
<comment type="subunit">
    <text evidence="1">Homodimer.</text>
</comment>
<comment type="subcellular location">
    <subcellularLocation>
        <location evidence="1">Cytoplasm</location>
    </subcellularLocation>
</comment>
<comment type="similarity">
    <text evidence="1">Belongs to the class-II aminoacyl-tRNA synthetase family. Type 2 subfamily.</text>
</comment>
<keyword id="KW-0030">Aminoacyl-tRNA synthetase</keyword>
<keyword id="KW-0067">ATP-binding</keyword>
<keyword id="KW-0963">Cytoplasm</keyword>
<keyword id="KW-0436">Ligase</keyword>
<keyword id="KW-0460">Magnesium</keyword>
<keyword id="KW-0479">Metal-binding</keyword>
<keyword id="KW-0547">Nucleotide-binding</keyword>
<keyword id="KW-0648">Protein biosynthesis</keyword>
<keyword id="KW-1185">Reference proteome</keyword>
<gene>
    <name evidence="1" type="primary">aspS</name>
    <name type="ordered locus">PF0869</name>
</gene>